<keyword id="KW-0012">Acyltransferase</keyword>
<keyword id="KW-0028">Amino-acid biosynthesis</keyword>
<keyword id="KW-0055">Arginine biosynthesis</keyword>
<keyword id="KW-0068">Autocatalytic cleavage</keyword>
<keyword id="KW-0150">Chloroplast</keyword>
<keyword id="KW-0511">Multifunctional enzyme</keyword>
<keyword id="KW-0934">Plastid</keyword>
<keyword id="KW-1185">Reference proteome</keyword>
<keyword id="KW-0808">Transferase</keyword>
<accession>B8AL33</accession>
<comment type="function">
    <text evidence="1">Catalyzes two activities which are involved in the cyclic version of arginine biosynthesis: the synthesis of acetylglutamate from glutamate and acetyl-CoA, and of ornithine by transacetylation between acetylornithine and glutamate.</text>
</comment>
<comment type="catalytic activity">
    <reaction evidence="1">
        <text>N(2)-acetyl-L-ornithine + L-glutamate = N-acetyl-L-glutamate + L-ornithine</text>
        <dbReference type="Rhea" id="RHEA:15349"/>
        <dbReference type="ChEBI" id="CHEBI:29985"/>
        <dbReference type="ChEBI" id="CHEBI:44337"/>
        <dbReference type="ChEBI" id="CHEBI:46911"/>
        <dbReference type="ChEBI" id="CHEBI:57805"/>
        <dbReference type="EC" id="2.3.1.35"/>
    </reaction>
</comment>
<comment type="catalytic activity">
    <reaction evidence="1">
        <text>L-glutamate + acetyl-CoA = N-acetyl-L-glutamate + CoA + H(+)</text>
        <dbReference type="Rhea" id="RHEA:24292"/>
        <dbReference type="ChEBI" id="CHEBI:15378"/>
        <dbReference type="ChEBI" id="CHEBI:29985"/>
        <dbReference type="ChEBI" id="CHEBI:44337"/>
        <dbReference type="ChEBI" id="CHEBI:57287"/>
        <dbReference type="ChEBI" id="CHEBI:57288"/>
        <dbReference type="EC" id="2.3.1.1"/>
    </reaction>
</comment>
<comment type="pathway">
    <text evidence="1">Amino-acid biosynthesis; L-arginine biosynthesis; L-ornithine and N-acetyl-L-glutamate from L-glutamate and N(2)-acetyl-L-ornithine (cyclic): step 1/1.</text>
</comment>
<comment type="pathway">
    <text evidence="1">Amino-acid biosynthesis; L-arginine biosynthesis; N(2)-acetyl-L-ornithine from L-glutamate: step 1/4.</text>
</comment>
<comment type="subunit">
    <text evidence="1">Heterodimer of an alpha and a beta chain.</text>
</comment>
<comment type="subcellular location">
    <subcellularLocation>
        <location evidence="1">Plastid</location>
        <location evidence="1">Chloroplast</location>
    </subcellularLocation>
</comment>
<comment type="miscellaneous">
    <text evidence="1">This protein may be expected to contain an N-terminal transit peptide but none has been predicted.</text>
</comment>
<comment type="similarity">
    <text evidence="1">Belongs to the ArgJ family.</text>
</comment>
<gene>
    <name type="ORF">OsI_11009</name>
</gene>
<organism>
    <name type="scientific">Oryza sativa subsp. indica</name>
    <name type="common">Rice</name>
    <dbReference type="NCBI Taxonomy" id="39946"/>
    <lineage>
        <taxon>Eukaryota</taxon>
        <taxon>Viridiplantae</taxon>
        <taxon>Streptophyta</taxon>
        <taxon>Embryophyta</taxon>
        <taxon>Tracheophyta</taxon>
        <taxon>Spermatophyta</taxon>
        <taxon>Magnoliopsida</taxon>
        <taxon>Liliopsida</taxon>
        <taxon>Poales</taxon>
        <taxon>Poaceae</taxon>
        <taxon>BOP clade</taxon>
        <taxon>Oryzoideae</taxon>
        <taxon>Oryzeae</taxon>
        <taxon>Oryzinae</taxon>
        <taxon>Oryza</taxon>
        <taxon>Oryza sativa</taxon>
    </lineage>
</organism>
<name>ARGJ_ORYSI</name>
<proteinExistence type="inferred from homology"/>
<dbReference type="EC" id="2.3.1.35" evidence="1"/>
<dbReference type="EC" id="2.3.1.1" evidence="1"/>
<dbReference type="EMBL" id="CM000128">
    <property type="protein sequence ID" value="EEC74974.1"/>
    <property type="molecule type" value="Genomic_DNA"/>
</dbReference>
<dbReference type="SMR" id="B8AL33"/>
<dbReference type="STRING" id="39946.B8AL33"/>
<dbReference type="MEROPS" id="T05.002"/>
<dbReference type="EnsemblPlants" id="BGIOSGA010989-TA">
    <property type="protein sequence ID" value="BGIOSGA010989-PA"/>
    <property type="gene ID" value="BGIOSGA010989"/>
</dbReference>
<dbReference type="EnsemblPlants" id="OsIR64_03g0012630.01">
    <property type="protein sequence ID" value="OsIR64_03g0012630.01"/>
    <property type="gene ID" value="OsIR64_03g0012630"/>
</dbReference>
<dbReference type="EnsemblPlants" id="OsLima_03g0012790.01">
    <property type="protein sequence ID" value="OsLima_03g0012790.01"/>
    <property type="gene ID" value="OsLima_03g0012790"/>
</dbReference>
<dbReference type="EnsemblPlants" id="OsLiXu_03g0012740.01">
    <property type="protein sequence ID" value="OsLiXu_03g0012740.01"/>
    <property type="gene ID" value="OsLiXu_03g0012740"/>
</dbReference>
<dbReference type="EnsemblPlants" id="OsMH63_03G012750_01">
    <property type="protein sequence ID" value="OsMH63_03G012750_01"/>
    <property type="gene ID" value="OsMH63_03G012750"/>
</dbReference>
<dbReference type="EnsemblPlants" id="OsPr106_03g0012730.02">
    <property type="protein sequence ID" value="OsPr106_03g0012730.02"/>
    <property type="gene ID" value="OsPr106_03g0012730"/>
</dbReference>
<dbReference type="Gramene" id="BGIOSGA010989-TA">
    <property type="protein sequence ID" value="BGIOSGA010989-PA"/>
    <property type="gene ID" value="BGIOSGA010989"/>
</dbReference>
<dbReference type="Gramene" id="OsIR64_03g0012630.01">
    <property type="protein sequence ID" value="OsIR64_03g0012630.01"/>
    <property type="gene ID" value="OsIR64_03g0012630"/>
</dbReference>
<dbReference type="Gramene" id="OsLima_03g0012790.01">
    <property type="protein sequence ID" value="OsLima_03g0012790.01"/>
    <property type="gene ID" value="OsLima_03g0012790"/>
</dbReference>
<dbReference type="Gramene" id="OsLiXu_03g0012740.01">
    <property type="protein sequence ID" value="OsLiXu_03g0012740.01"/>
    <property type="gene ID" value="OsLiXu_03g0012740"/>
</dbReference>
<dbReference type="Gramene" id="OsMH63_03G012750_01">
    <property type="protein sequence ID" value="OsMH63_03G012750_01"/>
    <property type="gene ID" value="OsMH63_03G012750"/>
</dbReference>
<dbReference type="Gramene" id="OsPr106_03g0012730.02">
    <property type="protein sequence ID" value="OsPr106_03g0012730.02"/>
    <property type="gene ID" value="OsPr106_03g0012730"/>
</dbReference>
<dbReference type="HOGENOM" id="CLU_027172_1_1_1"/>
<dbReference type="OMA" id="WGRIVMA"/>
<dbReference type="UniPathway" id="UPA00068">
    <property type="reaction ID" value="UER00106"/>
</dbReference>
<dbReference type="UniPathway" id="UPA00068">
    <property type="reaction ID" value="UER00111"/>
</dbReference>
<dbReference type="Proteomes" id="UP000007015">
    <property type="component" value="Chromosome 3"/>
</dbReference>
<dbReference type="GO" id="GO:0009507">
    <property type="term" value="C:chloroplast"/>
    <property type="evidence" value="ECO:0007669"/>
    <property type="project" value="UniProtKB-SubCell"/>
</dbReference>
<dbReference type="GO" id="GO:0004358">
    <property type="term" value="F:glutamate N-acetyltransferase activity"/>
    <property type="evidence" value="ECO:0007669"/>
    <property type="project" value="UniProtKB-UniRule"/>
</dbReference>
<dbReference type="GO" id="GO:0004042">
    <property type="term" value="F:L-glutamate N-acetyltransferase activity"/>
    <property type="evidence" value="ECO:0007669"/>
    <property type="project" value="UniProtKB-UniRule"/>
</dbReference>
<dbReference type="GO" id="GO:0006526">
    <property type="term" value="P:L-arginine biosynthetic process"/>
    <property type="evidence" value="ECO:0007669"/>
    <property type="project" value="UniProtKB-UniRule"/>
</dbReference>
<dbReference type="GO" id="GO:0006592">
    <property type="term" value="P:ornithine biosynthetic process"/>
    <property type="evidence" value="ECO:0007669"/>
    <property type="project" value="TreeGrafter"/>
</dbReference>
<dbReference type="CDD" id="cd02152">
    <property type="entry name" value="OAT"/>
    <property type="match status" value="1"/>
</dbReference>
<dbReference type="FunFam" id="3.10.20.340:FF:000001">
    <property type="entry name" value="Arginine biosynthesis bifunctional protein ArgJ, chloroplastic"/>
    <property type="match status" value="1"/>
</dbReference>
<dbReference type="FunFam" id="3.60.70.12:FF:000001">
    <property type="entry name" value="Arginine biosynthesis bifunctional protein ArgJ, chloroplastic"/>
    <property type="match status" value="1"/>
</dbReference>
<dbReference type="Gene3D" id="3.10.20.340">
    <property type="entry name" value="ArgJ beta chain, C-terminal domain"/>
    <property type="match status" value="1"/>
</dbReference>
<dbReference type="Gene3D" id="3.60.70.12">
    <property type="entry name" value="L-amino peptidase D-ALA esterase/amidase"/>
    <property type="match status" value="1"/>
</dbReference>
<dbReference type="HAMAP" id="MF_01106">
    <property type="entry name" value="ArgJ"/>
    <property type="match status" value="1"/>
</dbReference>
<dbReference type="InterPro" id="IPR002813">
    <property type="entry name" value="Arg_biosynth_ArgJ"/>
</dbReference>
<dbReference type="InterPro" id="IPR016117">
    <property type="entry name" value="ArgJ-like_dom_sf"/>
</dbReference>
<dbReference type="InterPro" id="IPR042195">
    <property type="entry name" value="ArgJ_beta_C"/>
</dbReference>
<dbReference type="NCBIfam" id="TIGR00120">
    <property type="entry name" value="ArgJ"/>
    <property type="match status" value="1"/>
</dbReference>
<dbReference type="NCBIfam" id="NF003802">
    <property type="entry name" value="PRK05388.1"/>
    <property type="match status" value="1"/>
</dbReference>
<dbReference type="PANTHER" id="PTHR23100">
    <property type="entry name" value="ARGININE BIOSYNTHESIS BIFUNCTIONAL PROTEIN ARGJ"/>
    <property type="match status" value="1"/>
</dbReference>
<dbReference type="PANTHER" id="PTHR23100:SF0">
    <property type="entry name" value="ARGININE BIOSYNTHESIS BIFUNCTIONAL PROTEIN ARGJ, MITOCHONDRIAL"/>
    <property type="match status" value="1"/>
</dbReference>
<dbReference type="Pfam" id="PF01960">
    <property type="entry name" value="ArgJ"/>
    <property type="match status" value="1"/>
</dbReference>
<dbReference type="SUPFAM" id="SSF56266">
    <property type="entry name" value="DmpA/ArgJ-like"/>
    <property type="match status" value="1"/>
</dbReference>
<feature type="chain" id="PRO_0000397978" description="Arginine biosynthesis bifunctional protein ArgJ alpha chain" evidence="1">
    <location>
        <begin position="1"/>
        <end position="243"/>
    </location>
</feature>
<feature type="chain" id="PRO_0000397979" description="Arginine biosynthesis bifunctional protein ArgJ beta chain" evidence="1">
    <location>
        <begin position="244"/>
        <end position="463"/>
    </location>
</feature>
<feature type="active site" description="Nucleophile" evidence="1">
    <location>
        <position position="244"/>
    </location>
</feature>
<feature type="binding site" evidence="1">
    <location>
        <position position="207"/>
    </location>
    <ligand>
        <name>substrate</name>
    </ligand>
</feature>
<feature type="binding site" evidence="1">
    <location>
        <position position="233"/>
    </location>
    <ligand>
        <name>substrate</name>
    </ligand>
</feature>
<feature type="binding site" evidence="1">
    <location>
        <position position="244"/>
    </location>
    <ligand>
        <name>substrate</name>
    </ligand>
</feature>
<feature type="binding site" evidence="1">
    <location>
        <position position="331"/>
    </location>
    <ligand>
        <name>substrate</name>
    </ligand>
</feature>
<feature type="binding site" evidence="1">
    <location>
        <position position="458"/>
    </location>
    <ligand>
        <name>substrate</name>
    </ligand>
</feature>
<feature type="binding site" evidence="1">
    <location>
        <position position="463"/>
    </location>
    <ligand>
        <name>substrate</name>
    </ligand>
</feature>
<feature type="site" description="Involved in the stabilization of negative charge on the oxyanion by the formation of the oxyanion hole" evidence="1">
    <location>
        <position position="168"/>
    </location>
</feature>
<feature type="site" description="Involved in the stabilization of negative charge on the oxyanion by the formation of the oxyanion hole" evidence="1">
    <location>
        <position position="169"/>
    </location>
</feature>
<feature type="site" description="Cleavage; by autolysis" evidence="1">
    <location>
        <begin position="243"/>
        <end position="244"/>
    </location>
</feature>
<evidence type="ECO:0000255" key="1">
    <source>
        <dbReference type="HAMAP-Rule" id="MF_03124"/>
    </source>
</evidence>
<reference key="1">
    <citation type="journal article" date="2005" name="PLoS Biol.">
        <title>The genomes of Oryza sativa: a history of duplications.</title>
        <authorList>
            <person name="Yu J."/>
            <person name="Wang J."/>
            <person name="Lin W."/>
            <person name="Li S."/>
            <person name="Li H."/>
            <person name="Zhou J."/>
            <person name="Ni P."/>
            <person name="Dong W."/>
            <person name="Hu S."/>
            <person name="Zeng C."/>
            <person name="Zhang J."/>
            <person name="Zhang Y."/>
            <person name="Li R."/>
            <person name="Xu Z."/>
            <person name="Li S."/>
            <person name="Li X."/>
            <person name="Zheng H."/>
            <person name="Cong L."/>
            <person name="Lin L."/>
            <person name="Yin J."/>
            <person name="Geng J."/>
            <person name="Li G."/>
            <person name="Shi J."/>
            <person name="Liu J."/>
            <person name="Lv H."/>
            <person name="Li J."/>
            <person name="Wang J."/>
            <person name="Deng Y."/>
            <person name="Ran L."/>
            <person name="Shi X."/>
            <person name="Wang X."/>
            <person name="Wu Q."/>
            <person name="Li C."/>
            <person name="Ren X."/>
            <person name="Wang J."/>
            <person name="Wang X."/>
            <person name="Li D."/>
            <person name="Liu D."/>
            <person name="Zhang X."/>
            <person name="Ji Z."/>
            <person name="Zhao W."/>
            <person name="Sun Y."/>
            <person name="Zhang Z."/>
            <person name="Bao J."/>
            <person name="Han Y."/>
            <person name="Dong L."/>
            <person name="Ji J."/>
            <person name="Chen P."/>
            <person name="Wu S."/>
            <person name="Liu J."/>
            <person name="Xiao Y."/>
            <person name="Bu D."/>
            <person name="Tan J."/>
            <person name="Yang L."/>
            <person name="Ye C."/>
            <person name="Zhang J."/>
            <person name="Xu J."/>
            <person name="Zhou Y."/>
            <person name="Yu Y."/>
            <person name="Zhang B."/>
            <person name="Zhuang S."/>
            <person name="Wei H."/>
            <person name="Liu B."/>
            <person name="Lei M."/>
            <person name="Yu H."/>
            <person name="Li Y."/>
            <person name="Xu H."/>
            <person name="Wei S."/>
            <person name="He X."/>
            <person name="Fang L."/>
            <person name="Zhang Z."/>
            <person name="Zhang Y."/>
            <person name="Huang X."/>
            <person name="Su Z."/>
            <person name="Tong W."/>
            <person name="Li J."/>
            <person name="Tong Z."/>
            <person name="Li S."/>
            <person name="Ye J."/>
            <person name="Wang L."/>
            <person name="Fang L."/>
            <person name="Lei T."/>
            <person name="Chen C.-S."/>
            <person name="Chen H.-C."/>
            <person name="Xu Z."/>
            <person name="Li H."/>
            <person name="Huang H."/>
            <person name="Zhang F."/>
            <person name="Xu H."/>
            <person name="Li N."/>
            <person name="Zhao C."/>
            <person name="Li S."/>
            <person name="Dong L."/>
            <person name="Huang Y."/>
            <person name="Li L."/>
            <person name="Xi Y."/>
            <person name="Qi Q."/>
            <person name="Li W."/>
            <person name="Zhang B."/>
            <person name="Hu W."/>
            <person name="Zhang Y."/>
            <person name="Tian X."/>
            <person name="Jiao Y."/>
            <person name="Liang X."/>
            <person name="Jin J."/>
            <person name="Gao L."/>
            <person name="Zheng W."/>
            <person name="Hao B."/>
            <person name="Liu S.-M."/>
            <person name="Wang W."/>
            <person name="Yuan L."/>
            <person name="Cao M."/>
            <person name="McDermott J."/>
            <person name="Samudrala R."/>
            <person name="Wang J."/>
            <person name="Wong G.K.-S."/>
            <person name="Yang H."/>
        </authorList>
    </citation>
    <scope>NUCLEOTIDE SEQUENCE [LARGE SCALE GENOMIC DNA]</scope>
    <source>
        <strain>cv. 93-11</strain>
    </source>
</reference>
<sequence>MPPPSLLLLHPRTPLPHHHRSSFRTSSPRPSRMVCAAAEGFISAAPILLPDGPWKQVEGGVTAAKGFKAAGIYGGLRAKGEKPDLALVACDVDATVAGAFTTNVVAAAPVLYCKRVLNSSKTARAVLINAGQANAATGDAGYQDTVDSADAVAKLLNVSTNDILIQSTGVIGQRIKKEALVNSLHRLVGSLSSSIEGANSAAVAITTTDLVSKSIAVQTEIGGVPIKIGGMAKGSGMIHPNMATMLGVLTTDAQVSSDVWREMVRTSVSRSFNQITVDGDTSTNDCVIALASGLSGLSSILTHDSTEAQQFQACLDAVMQGLAKSIAWDGEGATCLIEVTVAGANNEAEAAKIARSVASSSLVKAAVFGRDPNWGRIACSVGYSGIQFDADQLDISLGAIPLMKNGQPLPFDRSAASKYLKDAGDIHGTVNIDVSVGRGGGSGKAWGCDLSYKYVEINAEYTT</sequence>
<protein>
    <recommendedName>
        <fullName evidence="1">Arginine biosynthesis bifunctional protein ArgJ, chloroplastic</fullName>
    </recommendedName>
    <domain>
        <recommendedName>
            <fullName evidence="1">Glutamate N-acetyltransferase</fullName>
            <shortName evidence="1">GAT</shortName>
            <ecNumber evidence="1">2.3.1.35</ecNumber>
        </recommendedName>
        <alternativeName>
            <fullName evidence="1">Ornithine acetyltransferase</fullName>
            <shortName evidence="1">OATase</shortName>
        </alternativeName>
        <alternativeName>
            <fullName evidence="1">Ornithine transacetylase</fullName>
        </alternativeName>
    </domain>
    <domain>
        <recommendedName>
            <fullName evidence="1">Amino-acid acetyltransferase</fullName>
            <ecNumber evidence="1">2.3.1.1</ecNumber>
        </recommendedName>
        <alternativeName>
            <fullName evidence="1">N-acetylglutamate synthase</fullName>
            <shortName evidence="1">AGS</shortName>
        </alternativeName>
    </domain>
    <component>
        <recommendedName>
            <fullName evidence="1">Arginine biosynthesis bifunctional protein ArgJ alpha chain</fullName>
        </recommendedName>
    </component>
    <component>
        <recommendedName>
            <fullName evidence="1">Arginine biosynthesis bifunctional protein ArgJ beta chain</fullName>
        </recommendedName>
    </component>
</protein>